<evidence type="ECO:0000255" key="1">
    <source>
        <dbReference type="HAMAP-Rule" id="MF_00006"/>
    </source>
</evidence>
<name>ARLY_STAAB</name>
<feature type="chain" id="PRO_0000240773" description="Argininosuccinate lyase">
    <location>
        <begin position="1"/>
        <end position="459"/>
    </location>
</feature>
<organism>
    <name type="scientific">Staphylococcus aureus (strain bovine RF122 / ET3-1)</name>
    <dbReference type="NCBI Taxonomy" id="273036"/>
    <lineage>
        <taxon>Bacteria</taxon>
        <taxon>Bacillati</taxon>
        <taxon>Bacillota</taxon>
        <taxon>Bacilli</taxon>
        <taxon>Bacillales</taxon>
        <taxon>Staphylococcaceae</taxon>
        <taxon>Staphylococcus</taxon>
    </lineage>
</organism>
<keyword id="KW-0028">Amino-acid biosynthesis</keyword>
<keyword id="KW-0055">Arginine biosynthesis</keyword>
<keyword id="KW-0963">Cytoplasm</keyword>
<keyword id="KW-0456">Lyase</keyword>
<comment type="catalytic activity">
    <reaction evidence="1">
        <text>2-(N(omega)-L-arginino)succinate = fumarate + L-arginine</text>
        <dbReference type="Rhea" id="RHEA:24020"/>
        <dbReference type="ChEBI" id="CHEBI:29806"/>
        <dbReference type="ChEBI" id="CHEBI:32682"/>
        <dbReference type="ChEBI" id="CHEBI:57472"/>
        <dbReference type="EC" id="4.3.2.1"/>
    </reaction>
</comment>
<comment type="pathway">
    <text evidence="1">Amino-acid biosynthesis; L-arginine biosynthesis; L-arginine from L-ornithine and carbamoyl phosphate: step 3/3.</text>
</comment>
<comment type="subcellular location">
    <subcellularLocation>
        <location evidence="1">Cytoplasm</location>
    </subcellularLocation>
</comment>
<comment type="similarity">
    <text evidence="1">Belongs to the lyase 1 family. Argininosuccinate lyase subfamily.</text>
</comment>
<sequence>MSNKAWGGRFEVQPEEWVDDFNASITFDQTLIDQDIEGSIAHATMLANQGIISQQDSEQIIQGLKSIQHDYHQDQIQFSASLEDIHLNIEHELIKRIGDAGGKLHTGRSRNDQVATDMHLYTKKQVQDIIALIKSLQSVIVDIASNNVDTIMPGYTHLQRAQPISFAHHIMTYFWMLQRDQQRFEDSLKRIDINPLGAAALSGTTYPIDRHETTALLNFGSLYENSLDAVSDRDYIIETLHNISLTMVHLSRFAEEIIFWSTDEAKFITLSDAFSTGSSIMPQKKNPDMAELIRGKVGRTTGHLMSMLMTLKGLPLAYNKDMQEDKEGLFDAVHTIKGSLRIFEGMIQTMTINKERLNQTVKEDFSNATELADYLVTKNIPFRTAHEIVGKIVLECIQQGHYLLDVPLATYQQHHSSIDADIYDYLQPENCLKRRQSYGSTGQSSVIQQLDVAKQLLSQ</sequence>
<reference key="1">
    <citation type="journal article" date="2007" name="PLoS ONE">
        <title>Molecular correlates of host specialization in Staphylococcus aureus.</title>
        <authorList>
            <person name="Herron-Olson L."/>
            <person name="Fitzgerald J.R."/>
            <person name="Musser J.M."/>
            <person name="Kapur V."/>
        </authorList>
    </citation>
    <scope>NUCLEOTIDE SEQUENCE [LARGE SCALE GENOMIC DNA]</scope>
    <source>
        <strain>bovine RF122 / ET3-1</strain>
    </source>
</reference>
<dbReference type="EC" id="4.3.2.1" evidence="1"/>
<dbReference type="EMBL" id="AJ938182">
    <property type="protein sequence ID" value="CAI80516.1"/>
    <property type="molecule type" value="Genomic_DNA"/>
</dbReference>
<dbReference type="RefSeq" id="WP_000066052.1">
    <property type="nucleotide sequence ID" value="NC_007622.1"/>
</dbReference>
<dbReference type="SMR" id="Q2YWS5"/>
<dbReference type="KEGG" id="sab:SAB0828c"/>
<dbReference type="HOGENOM" id="CLU_027272_2_3_9"/>
<dbReference type="UniPathway" id="UPA00068">
    <property type="reaction ID" value="UER00114"/>
</dbReference>
<dbReference type="GO" id="GO:0005829">
    <property type="term" value="C:cytosol"/>
    <property type="evidence" value="ECO:0007669"/>
    <property type="project" value="TreeGrafter"/>
</dbReference>
<dbReference type="GO" id="GO:0004056">
    <property type="term" value="F:argininosuccinate lyase activity"/>
    <property type="evidence" value="ECO:0007669"/>
    <property type="project" value="UniProtKB-UniRule"/>
</dbReference>
<dbReference type="GO" id="GO:0042450">
    <property type="term" value="P:arginine biosynthetic process via ornithine"/>
    <property type="evidence" value="ECO:0007669"/>
    <property type="project" value="InterPro"/>
</dbReference>
<dbReference type="GO" id="GO:0006526">
    <property type="term" value="P:L-arginine biosynthetic process"/>
    <property type="evidence" value="ECO:0007669"/>
    <property type="project" value="UniProtKB-UniRule"/>
</dbReference>
<dbReference type="CDD" id="cd01359">
    <property type="entry name" value="Argininosuccinate_lyase"/>
    <property type="match status" value="1"/>
</dbReference>
<dbReference type="FunFam" id="1.10.275.10:FF:000002">
    <property type="entry name" value="Argininosuccinate lyase"/>
    <property type="match status" value="1"/>
</dbReference>
<dbReference type="FunFam" id="1.10.40.30:FF:000001">
    <property type="entry name" value="Argininosuccinate lyase"/>
    <property type="match status" value="1"/>
</dbReference>
<dbReference type="FunFam" id="1.20.200.10:FF:000006">
    <property type="entry name" value="Argininosuccinate lyase"/>
    <property type="match status" value="1"/>
</dbReference>
<dbReference type="Gene3D" id="1.10.40.30">
    <property type="entry name" value="Fumarase/aspartase (C-terminal domain)"/>
    <property type="match status" value="1"/>
</dbReference>
<dbReference type="Gene3D" id="1.20.200.10">
    <property type="entry name" value="Fumarase/aspartase (Central domain)"/>
    <property type="match status" value="1"/>
</dbReference>
<dbReference type="Gene3D" id="1.10.275.10">
    <property type="entry name" value="Fumarase/aspartase (N-terminal domain)"/>
    <property type="match status" value="1"/>
</dbReference>
<dbReference type="HAMAP" id="MF_00006">
    <property type="entry name" value="Arg_succ_lyase"/>
    <property type="match status" value="1"/>
</dbReference>
<dbReference type="InterPro" id="IPR029419">
    <property type="entry name" value="Arg_succ_lyase_C"/>
</dbReference>
<dbReference type="InterPro" id="IPR009049">
    <property type="entry name" value="Argininosuccinate_lyase"/>
</dbReference>
<dbReference type="InterPro" id="IPR024083">
    <property type="entry name" value="Fumarase/histidase_N"/>
</dbReference>
<dbReference type="InterPro" id="IPR020557">
    <property type="entry name" value="Fumarate_lyase_CS"/>
</dbReference>
<dbReference type="InterPro" id="IPR000362">
    <property type="entry name" value="Fumarate_lyase_fam"/>
</dbReference>
<dbReference type="InterPro" id="IPR022761">
    <property type="entry name" value="Fumarate_lyase_N"/>
</dbReference>
<dbReference type="InterPro" id="IPR008948">
    <property type="entry name" value="L-Aspartase-like"/>
</dbReference>
<dbReference type="NCBIfam" id="TIGR00838">
    <property type="entry name" value="argH"/>
    <property type="match status" value="1"/>
</dbReference>
<dbReference type="PANTHER" id="PTHR43814">
    <property type="entry name" value="ARGININOSUCCINATE LYASE"/>
    <property type="match status" value="1"/>
</dbReference>
<dbReference type="PANTHER" id="PTHR43814:SF1">
    <property type="entry name" value="ARGININOSUCCINATE LYASE"/>
    <property type="match status" value="1"/>
</dbReference>
<dbReference type="Pfam" id="PF14698">
    <property type="entry name" value="ASL_C2"/>
    <property type="match status" value="1"/>
</dbReference>
<dbReference type="Pfam" id="PF00206">
    <property type="entry name" value="Lyase_1"/>
    <property type="match status" value="1"/>
</dbReference>
<dbReference type="PRINTS" id="PR00145">
    <property type="entry name" value="ARGSUCLYASE"/>
</dbReference>
<dbReference type="PRINTS" id="PR00149">
    <property type="entry name" value="FUMRATELYASE"/>
</dbReference>
<dbReference type="SUPFAM" id="SSF48557">
    <property type="entry name" value="L-aspartase-like"/>
    <property type="match status" value="1"/>
</dbReference>
<dbReference type="PROSITE" id="PS00163">
    <property type="entry name" value="FUMARATE_LYASES"/>
    <property type="match status" value="1"/>
</dbReference>
<protein>
    <recommendedName>
        <fullName evidence="1">Argininosuccinate lyase</fullName>
        <shortName evidence="1">ASAL</shortName>
        <ecNumber evidence="1">4.3.2.1</ecNumber>
    </recommendedName>
    <alternativeName>
        <fullName evidence="1">Arginosuccinase</fullName>
    </alternativeName>
</protein>
<proteinExistence type="inferred from homology"/>
<accession>Q2YWS5</accession>
<gene>
    <name evidence="1" type="primary">argH</name>
    <name type="ordered locus">SAB0828c</name>
</gene>